<protein>
    <recommendedName>
        <fullName evidence="1">Inositol 2-dehydrogenase</fullName>
        <ecNumber evidence="1">1.1.1.18</ecNumber>
    </recommendedName>
    <alternativeName>
        <fullName evidence="1">Myo-inositol 2-dehydrogenase</fullName>
        <shortName evidence="1">MI 2-dehydrogenase</shortName>
    </alternativeName>
</protein>
<accession>Q7CV90</accession>
<keyword id="KW-0520">NAD</keyword>
<keyword id="KW-0560">Oxidoreductase</keyword>
<keyword id="KW-1185">Reference proteome</keyword>
<gene>
    <name evidence="1" type="primary">iolG</name>
    <name type="ordered locus">Atu4554</name>
    <name type="ORF">AGR_L_628</name>
</gene>
<reference key="1">
    <citation type="journal article" date="2001" name="Science">
        <title>The genome of the natural genetic engineer Agrobacterium tumefaciens C58.</title>
        <authorList>
            <person name="Wood D.W."/>
            <person name="Setubal J.C."/>
            <person name="Kaul R."/>
            <person name="Monks D.E."/>
            <person name="Kitajima J.P."/>
            <person name="Okura V.K."/>
            <person name="Zhou Y."/>
            <person name="Chen L."/>
            <person name="Wood G.E."/>
            <person name="Almeida N.F. Jr."/>
            <person name="Woo L."/>
            <person name="Chen Y."/>
            <person name="Paulsen I.T."/>
            <person name="Eisen J.A."/>
            <person name="Karp P.D."/>
            <person name="Bovee D. Sr."/>
            <person name="Chapman P."/>
            <person name="Clendenning J."/>
            <person name="Deatherage G."/>
            <person name="Gillet W."/>
            <person name="Grant C."/>
            <person name="Kutyavin T."/>
            <person name="Levy R."/>
            <person name="Li M.-J."/>
            <person name="McClelland E."/>
            <person name="Palmieri A."/>
            <person name="Raymond C."/>
            <person name="Rouse G."/>
            <person name="Saenphimmachak C."/>
            <person name="Wu Z."/>
            <person name="Romero P."/>
            <person name="Gordon D."/>
            <person name="Zhang S."/>
            <person name="Yoo H."/>
            <person name="Tao Y."/>
            <person name="Biddle P."/>
            <person name="Jung M."/>
            <person name="Krespan W."/>
            <person name="Perry M."/>
            <person name="Gordon-Kamm B."/>
            <person name="Liao L."/>
            <person name="Kim S."/>
            <person name="Hendrick C."/>
            <person name="Zhao Z.-Y."/>
            <person name="Dolan M."/>
            <person name="Chumley F."/>
            <person name="Tingey S.V."/>
            <person name="Tomb J.-F."/>
            <person name="Gordon M.P."/>
            <person name="Olson M.V."/>
            <person name="Nester E.W."/>
        </authorList>
    </citation>
    <scope>NUCLEOTIDE SEQUENCE [LARGE SCALE GENOMIC DNA]</scope>
    <source>
        <strain>C58 / ATCC 33970</strain>
    </source>
</reference>
<reference key="2">
    <citation type="journal article" date="2001" name="Science">
        <title>Genome sequence of the plant pathogen and biotechnology agent Agrobacterium tumefaciens C58.</title>
        <authorList>
            <person name="Goodner B."/>
            <person name="Hinkle G."/>
            <person name="Gattung S."/>
            <person name="Miller N."/>
            <person name="Blanchard M."/>
            <person name="Qurollo B."/>
            <person name="Goldman B.S."/>
            <person name="Cao Y."/>
            <person name="Askenazi M."/>
            <person name="Halling C."/>
            <person name="Mullin L."/>
            <person name="Houmiel K."/>
            <person name="Gordon J."/>
            <person name="Vaudin M."/>
            <person name="Iartchouk O."/>
            <person name="Epp A."/>
            <person name="Liu F."/>
            <person name="Wollam C."/>
            <person name="Allinger M."/>
            <person name="Doughty D."/>
            <person name="Scott C."/>
            <person name="Lappas C."/>
            <person name="Markelz B."/>
            <person name="Flanagan C."/>
            <person name="Crowell C."/>
            <person name="Gurson J."/>
            <person name="Lomo C."/>
            <person name="Sear C."/>
            <person name="Strub G."/>
            <person name="Cielo C."/>
            <person name="Slater S."/>
        </authorList>
    </citation>
    <scope>NUCLEOTIDE SEQUENCE [LARGE SCALE GENOMIC DNA]</scope>
    <source>
        <strain>C58 / ATCC 33970</strain>
    </source>
</reference>
<name>IOLG_AGRFC</name>
<feature type="chain" id="PRO_0000352550" description="Inositol 2-dehydrogenase">
    <location>
        <begin position="1"/>
        <end position="336"/>
    </location>
</feature>
<comment type="function">
    <text evidence="1">Involved in the oxidation of myo-inositol (MI) to 2-keto-myo-inositol (2KMI or 2-inosose).</text>
</comment>
<comment type="catalytic activity">
    <reaction evidence="1">
        <text>myo-inositol + NAD(+) = scyllo-inosose + NADH + H(+)</text>
        <dbReference type="Rhea" id="RHEA:16949"/>
        <dbReference type="ChEBI" id="CHEBI:15378"/>
        <dbReference type="ChEBI" id="CHEBI:17268"/>
        <dbReference type="ChEBI" id="CHEBI:17811"/>
        <dbReference type="ChEBI" id="CHEBI:57540"/>
        <dbReference type="ChEBI" id="CHEBI:57945"/>
        <dbReference type="EC" id="1.1.1.18"/>
    </reaction>
</comment>
<comment type="subunit">
    <text evidence="1">Homotetramer.</text>
</comment>
<comment type="similarity">
    <text evidence="1">Belongs to the Gfo/Idh/MocA family.</text>
</comment>
<dbReference type="EC" id="1.1.1.18" evidence="1"/>
<dbReference type="EMBL" id="AE007870">
    <property type="protein sequence ID" value="AAK88889.2"/>
    <property type="molecule type" value="Genomic_DNA"/>
</dbReference>
<dbReference type="RefSeq" id="NP_356104.2">
    <property type="nucleotide sequence ID" value="NC_003063.2"/>
</dbReference>
<dbReference type="RefSeq" id="WP_010973956.1">
    <property type="nucleotide sequence ID" value="NC_003063.2"/>
</dbReference>
<dbReference type="SMR" id="Q7CV90"/>
<dbReference type="STRING" id="176299.Atu4554"/>
<dbReference type="EnsemblBacteria" id="AAK88889">
    <property type="protein sequence ID" value="AAK88889"/>
    <property type="gene ID" value="Atu4554"/>
</dbReference>
<dbReference type="GeneID" id="1141747"/>
<dbReference type="KEGG" id="atu:Atu4554"/>
<dbReference type="PATRIC" id="fig|176299.10.peg.4362"/>
<dbReference type="eggNOG" id="COG0673">
    <property type="taxonomic scope" value="Bacteria"/>
</dbReference>
<dbReference type="HOGENOM" id="CLU_023194_0_1_5"/>
<dbReference type="OrthoDB" id="9815825at2"/>
<dbReference type="PhylomeDB" id="Q7CV90"/>
<dbReference type="BioCyc" id="AGRO:ATU4554-MONOMER"/>
<dbReference type="Proteomes" id="UP000000813">
    <property type="component" value="Chromosome linear"/>
</dbReference>
<dbReference type="GO" id="GO:0050112">
    <property type="term" value="F:inositol 2-dehydrogenase (NAD+) activity"/>
    <property type="evidence" value="ECO:0007669"/>
    <property type="project" value="UniProtKB-UniRule"/>
</dbReference>
<dbReference type="GO" id="GO:0000166">
    <property type="term" value="F:nucleotide binding"/>
    <property type="evidence" value="ECO:0007669"/>
    <property type="project" value="InterPro"/>
</dbReference>
<dbReference type="GO" id="GO:0019310">
    <property type="term" value="P:inositol catabolic process"/>
    <property type="evidence" value="ECO:0007669"/>
    <property type="project" value="UniProtKB-UniRule"/>
</dbReference>
<dbReference type="Gene3D" id="3.30.360.10">
    <property type="entry name" value="Dihydrodipicolinate Reductase, domain 2"/>
    <property type="match status" value="1"/>
</dbReference>
<dbReference type="Gene3D" id="3.40.50.720">
    <property type="entry name" value="NAD(P)-binding Rossmann-like Domain"/>
    <property type="match status" value="1"/>
</dbReference>
<dbReference type="HAMAP" id="MF_01671">
    <property type="entry name" value="IolG"/>
    <property type="match status" value="1"/>
</dbReference>
<dbReference type="InterPro" id="IPR050424">
    <property type="entry name" value="Gfo-Idh-MocA_inositol_DH"/>
</dbReference>
<dbReference type="InterPro" id="IPR004104">
    <property type="entry name" value="Gfo/Idh/MocA-like_OxRdtase_C"/>
</dbReference>
<dbReference type="InterPro" id="IPR000683">
    <property type="entry name" value="Gfo/Idh/MocA-like_OxRdtase_N"/>
</dbReference>
<dbReference type="InterPro" id="IPR023794">
    <property type="entry name" value="MI/DCI_dehydrogenase"/>
</dbReference>
<dbReference type="InterPro" id="IPR036291">
    <property type="entry name" value="NAD(P)-bd_dom_sf"/>
</dbReference>
<dbReference type="PANTHER" id="PTHR43593">
    <property type="match status" value="1"/>
</dbReference>
<dbReference type="PANTHER" id="PTHR43593:SF1">
    <property type="entry name" value="INOSITOL 2-DEHYDROGENASE"/>
    <property type="match status" value="1"/>
</dbReference>
<dbReference type="Pfam" id="PF01408">
    <property type="entry name" value="GFO_IDH_MocA"/>
    <property type="match status" value="1"/>
</dbReference>
<dbReference type="Pfam" id="PF02894">
    <property type="entry name" value="GFO_IDH_MocA_C"/>
    <property type="match status" value="1"/>
</dbReference>
<dbReference type="SUPFAM" id="SSF55347">
    <property type="entry name" value="Glyceraldehyde-3-phosphate dehydrogenase-like, C-terminal domain"/>
    <property type="match status" value="1"/>
</dbReference>
<dbReference type="SUPFAM" id="SSF51735">
    <property type="entry name" value="NAD(P)-binding Rossmann-fold domains"/>
    <property type="match status" value="1"/>
</dbReference>
<sequence length="336" mass="36188">MTVRIGVVGTGAIGRDHARRINKVLGGAKIVALSDVNRASAEAVKNDIAPDAVLFATGEELIASPDVEAVLVTSWGATHEQYVLAAIAAGKPCFCEKPLATTAEGARRIVDAEVAHGKRLVQVGFMRRYDAGYVALKQAVDNRIGAPIMVHAAHRNPSVPEQYVTPMAIHDTMIHEIDVLRWLLDDDYVSARVLFPRSAARSHAKLKDPQIVILETAKGTIIDVEIFVNCHYGYDIQCQVVGEDGIASLPEPMSVQTRLGARLQNDILTDWKDRFIASYDVELQDFIHAAAKGTASGPNSWDGYVAAISSDACVAAQETQGAAVAIDLPARPALYQ</sequence>
<evidence type="ECO:0000255" key="1">
    <source>
        <dbReference type="HAMAP-Rule" id="MF_01671"/>
    </source>
</evidence>
<organism>
    <name type="scientific">Agrobacterium fabrum (strain C58 / ATCC 33970)</name>
    <name type="common">Agrobacterium tumefaciens (strain C58)</name>
    <dbReference type="NCBI Taxonomy" id="176299"/>
    <lineage>
        <taxon>Bacteria</taxon>
        <taxon>Pseudomonadati</taxon>
        <taxon>Pseudomonadota</taxon>
        <taxon>Alphaproteobacteria</taxon>
        <taxon>Hyphomicrobiales</taxon>
        <taxon>Rhizobiaceae</taxon>
        <taxon>Rhizobium/Agrobacterium group</taxon>
        <taxon>Agrobacterium</taxon>
        <taxon>Agrobacterium tumefaciens complex</taxon>
    </lineage>
</organism>
<proteinExistence type="inferred from homology"/>